<gene>
    <name evidence="1" type="primary">trpR</name>
    <name type="ordered locus">VSAL_I0659</name>
</gene>
<reference key="1">
    <citation type="journal article" date="2008" name="BMC Genomics">
        <title>The genome sequence of the fish pathogen Aliivibrio salmonicida strain LFI1238 shows extensive evidence of gene decay.</title>
        <authorList>
            <person name="Hjerde E."/>
            <person name="Lorentzen M.S."/>
            <person name="Holden M.T."/>
            <person name="Seeger K."/>
            <person name="Paulsen S."/>
            <person name="Bason N."/>
            <person name="Churcher C."/>
            <person name="Harris D."/>
            <person name="Norbertczak H."/>
            <person name="Quail M.A."/>
            <person name="Sanders S."/>
            <person name="Thurston S."/>
            <person name="Parkhill J."/>
            <person name="Willassen N.P."/>
            <person name="Thomson N.R."/>
        </authorList>
    </citation>
    <scope>NUCLEOTIDE SEQUENCE [LARGE SCALE GENOMIC DNA]</scope>
    <source>
        <strain>LFI1238</strain>
    </source>
</reference>
<feature type="chain" id="PRO_1000197138" description="Trp operon repressor homolog">
    <location>
        <begin position="1"/>
        <end position="108"/>
    </location>
</feature>
<feature type="DNA-binding region" evidence="1">
    <location>
        <begin position="59"/>
        <end position="82"/>
    </location>
</feature>
<accession>B6EGC9</accession>
<organism>
    <name type="scientific">Aliivibrio salmonicida (strain LFI1238)</name>
    <name type="common">Vibrio salmonicida (strain LFI1238)</name>
    <dbReference type="NCBI Taxonomy" id="316275"/>
    <lineage>
        <taxon>Bacteria</taxon>
        <taxon>Pseudomonadati</taxon>
        <taxon>Pseudomonadota</taxon>
        <taxon>Gammaproteobacteria</taxon>
        <taxon>Vibrionales</taxon>
        <taxon>Vibrionaceae</taxon>
        <taxon>Aliivibrio</taxon>
    </lineage>
</organism>
<proteinExistence type="inferred from homology"/>
<dbReference type="EMBL" id="FM178379">
    <property type="protein sequence ID" value="CAQ78344.1"/>
    <property type="molecule type" value="Genomic_DNA"/>
</dbReference>
<dbReference type="RefSeq" id="WP_012549465.1">
    <property type="nucleotide sequence ID" value="NC_011312.1"/>
</dbReference>
<dbReference type="SMR" id="B6EGC9"/>
<dbReference type="KEGG" id="vsa:VSAL_I0659"/>
<dbReference type="eggNOG" id="COG2973">
    <property type="taxonomic scope" value="Bacteria"/>
</dbReference>
<dbReference type="HOGENOM" id="CLU_147939_0_0_6"/>
<dbReference type="Proteomes" id="UP000001730">
    <property type="component" value="Chromosome 1"/>
</dbReference>
<dbReference type="GO" id="GO:0005737">
    <property type="term" value="C:cytoplasm"/>
    <property type="evidence" value="ECO:0007669"/>
    <property type="project" value="UniProtKB-SubCell"/>
</dbReference>
<dbReference type="GO" id="GO:0003700">
    <property type="term" value="F:DNA-binding transcription factor activity"/>
    <property type="evidence" value="ECO:0007669"/>
    <property type="project" value="InterPro"/>
</dbReference>
<dbReference type="GO" id="GO:0043565">
    <property type="term" value="F:sequence-specific DNA binding"/>
    <property type="evidence" value="ECO:0007669"/>
    <property type="project" value="InterPro"/>
</dbReference>
<dbReference type="GO" id="GO:0045892">
    <property type="term" value="P:negative regulation of DNA-templated transcription"/>
    <property type="evidence" value="ECO:0007669"/>
    <property type="project" value="UniProtKB-UniRule"/>
</dbReference>
<dbReference type="Gene3D" id="1.10.1270.10">
    <property type="entry name" value="TrpR-like"/>
    <property type="match status" value="1"/>
</dbReference>
<dbReference type="HAMAP" id="MF_00475">
    <property type="entry name" value="Trp_repressor"/>
    <property type="match status" value="1"/>
</dbReference>
<dbReference type="InterPro" id="IPR000831">
    <property type="entry name" value="Trp_repress"/>
</dbReference>
<dbReference type="InterPro" id="IPR013335">
    <property type="entry name" value="Trp_repress_bac"/>
</dbReference>
<dbReference type="InterPro" id="IPR010921">
    <property type="entry name" value="Trp_repressor/repl_initiator"/>
</dbReference>
<dbReference type="InterPro" id="IPR038116">
    <property type="entry name" value="TrpR-like_sf"/>
</dbReference>
<dbReference type="NCBIfam" id="TIGR01321">
    <property type="entry name" value="TrpR"/>
    <property type="match status" value="1"/>
</dbReference>
<dbReference type="PANTHER" id="PTHR38025">
    <property type="entry name" value="TRP OPERON REPRESSOR"/>
    <property type="match status" value="1"/>
</dbReference>
<dbReference type="PANTHER" id="PTHR38025:SF1">
    <property type="entry name" value="TRP OPERON REPRESSOR"/>
    <property type="match status" value="1"/>
</dbReference>
<dbReference type="Pfam" id="PF01371">
    <property type="entry name" value="Trp_repressor"/>
    <property type="match status" value="1"/>
</dbReference>
<dbReference type="PIRSF" id="PIRSF003196">
    <property type="entry name" value="Trp_repressor"/>
    <property type="match status" value="1"/>
</dbReference>
<dbReference type="SUPFAM" id="SSF48295">
    <property type="entry name" value="TrpR-like"/>
    <property type="match status" value="1"/>
</dbReference>
<name>TRPR_ALISL</name>
<sequence length="108" mass="11943">MSGSAKYSDWSQVMALIANAAEQNKHQSLLTMLMTPDEREALMARVNICHELLQGDLSQRQISQLLGVGVATITRGSNELKSHTDDEKAWLMEVLEVSAKSDQGARKE</sequence>
<comment type="function">
    <text evidence="1">This protein is an aporepressor. When complexed with L-tryptophan it binds the operator region of the trp operon and prevents the initiation of transcription.</text>
</comment>
<comment type="subunit">
    <text evidence="1">Homodimer.</text>
</comment>
<comment type="subcellular location">
    <subcellularLocation>
        <location evidence="1">Cytoplasm</location>
    </subcellularLocation>
</comment>
<comment type="similarity">
    <text evidence="1">Belongs to the TrpR family.</text>
</comment>
<keyword id="KW-0963">Cytoplasm</keyword>
<keyword id="KW-0238">DNA-binding</keyword>
<keyword id="KW-0678">Repressor</keyword>
<keyword id="KW-0804">Transcription</keyword>
<keyword id="KW-0805">Transcription regulation</keyword>
<evidence type="ECO:0000255" key="1">
    <source>
        <dbReference type="HAMAP-Rule" id="MF_00475"/>
    </source>
</evidence>
<protein>
    <recommendedName>
        <fullName evidence="1">Trp operon repressor homolog</fullName>
    </recommendedName>
</protein>